<reference key="1">
    <citation type="journal article" date="2000" name="Biochim. Biophys. Acta">
        <title>Cloning and characterization of additional members of the G protein-coupled receptor family.</title>
        <authorList>
            <person name="Lee D.K."/>
            <person name="Lynch K.R."/>
            <person name="Nguyen T."/>
            <person name="Im D.-S."/>
            <person name="Cheng R."/>
            <person name="Saldivia V.R."/>
            <person name="Liu Y."/>
            <person name="Liu I.S.C."/>
            <person name="Heng H.H.Q."/>
            <person name="Seeman P."/>
            <person name="George S.R."/>
            <person name="O'Dowd B.F."/>
            <person name="Marchese A."/>
        </authorList>
    </citation>
    <scope>NUCLEOTIDE SEQUENCE [GENOMIC DNA]</scope>
    <scope>TISSUE SPECIFICITY</scope>
</reference>
<gene>
    <name evidence="7" type="primary">TAAR3P</name>
    <name type="synonym">GPR57</name>
    <name type="synonym">TAAR3</name>
</gene>
<comment type="function">
    <text evidence="2">Putative olfactory receptor activated by several primary trace amines.</text>
</comment>
<comment type="subcellular location">
    <subcellularLocation>
        <location evidence="1">Cell membrane</location>
        <topology evidence="1">Multi-pass membrane protein</topology>
    </subcellularLocation>
</comment>
<comment type="tissue specificity">
    <text evidence="5">Not expressed in the pons, thalamus, globus pallidus, caudate, putamen or cerebellum.</text>
</comment>
<comment type="similarity">
    <text evidence="4">Belongs to the G-protein coupled receptor 1 family.</text>
</comment>
<comment type="caution">
    <text evidence="6">Could be the product of a pseudogene.</text>
</comment>
<accession>Q9P1P4</accession>
<name>TAAR3_HUMAN</name>
<evidence type="ECO:0000250" key="1">
    <source>
        <dbReference type="UniProtKB" id="Q5QD04"/>
    </source>
</evidence>
<evidence type="ECO:0000250" key="2">
    <source>
        <dbReference type="UniProtKB" id="Q5QD16"/>
    </source>
</evidence>
<evidence type="ECO:0000255" key="3"/>
<evidence type="ECO:0000255" key="4">
    <source>
        <dbReference type="PROSITE-ProRule" id="PRU00521"/>
    </source>
</evidence>
<evidence type="ECO:0000269" key="5">
    <source>
    </source>
</evidence>
<evidence type="ECO:0000305" key="6"/>
<evidence type="ECO:0000312" key="7">
    <source>
        <dbReference type="HGNC" id="HGNC:4513"/>
    </source>
</evidence>
<dbReference type="EMBL" id="AF112461">
    <property type="protein sequence ID" value="AAF27279.1"/>
    <property type="molecule type" value="Genomic_DNA"/>
</dbReference>
<dbReference type="SMR" id="Q9P1P4"/>
<dbReference type="FunCoup" id="Q9P1P4">
    <property type="interactions" value="52"/>
</dbReference>
<dbReference type="IntAct" id="Q9P1P4">
    <property type="interactions" value="8"/>
</dbReference>
<dbReference type="GlyCosmos" id="Q9P1P4">
    <property type="glycosylation" value="1 site, No reported glycans"/>
</dbReference>
<dbReference type="GlyGen" id="Q9P1P4">
    <property type="glycosylation" value="1 site"/>
</dbReference>
<dbReference type="BioMuta" id="HGNC:4513"/>
<dbReference type="DMDM" id="38257784"/>
<dbReference type="AGR" id="HGNC:4513"/>
<dbReference type="GeneCards" id="TAAR3P"/>
<dbReference type="HGNC" id="HGNC:4513">
    <property type="gene designation" value="TAAR3P"/>
</dbReference>
<dbReference type="neXtProt" id="NX_Q9P1P4"/>
<dbReference type="InParanoid" id="Q9P1P4"/>
<dbReference type="PAN-GO" id="Q9P1P4">
    <property type="GO annotations" value="1 GO annotation based on evolutionary models"/>
</dbReference>
<dbReference type="PhylomeDB" id="Q9P1P4"/>
<dbReference type="PathwayCommons" id="Q9P1P4"/>
<dbReference type="Reactome" id="R-HSA-375280">
    <property type="pathway name" value="Amine ligand-binding receptors"/>
</dbReference>
<dbReference type="Reactome" id="R-HSA-418555">
    <property type="pathway name" value="G alpha (s) signalling events"/>
</dbReference>
<dbReference type="SignaLink" id="Q9P1P4"/>
<dbReference type="Pharos" id="Q9P1P4">
    <property type="development level" value="Tdark"/>
</dbReference>
<dbReference type="PRO" id="PR:Q9P1P4"/>
<dbReference type="Proteomes" id="UP000005640">
    <property type="component" value="Unplaced"/>
</dbReference>
<dbReference type="RNAct" id="Q9P1P4">
    <property type="molecule type" value="protein"/>
</dbReference>
<dbReference type="GO" id="GO:0005886">
    <property type="term" value="C:plasma membrane"/>
    <property type="evidence" value="ECO:0000318"/>
    <property type="project" value="GO_Central"/>
</dbReference>
<dbReference type="GO" id="GO:0004930">
    <property type="term" value="F:G protein-coupled receptor activity"/>
    <property type="evidence" value="ECO:0000304"/>
    <property type="project" value="ProtInc"/>
</dbReference>
<dbReference type="GO" id="GO:0001594">
    <property type="term" value="F:trace-amine receptor activity"/>
    <property type="evidence" value="ECO:0000250"/>
    <property type="project" value="UniProtKB"/>
</dbReference>
<dbReference type="GO" id="GO:0007186">
    <property type="term" value="P:G protein-coupled receptor signaling pathway"/>
    <property type="evidence" value="ECO:0000318"/>
    <property type="project" value="GO_Central"/>
</dbReference>
<dbReference type="GO" id="GO:0007606">
    <property type="term" value="P:sensory perception of chemical stimulus"/>
    <property type="evidence" value="ECO:0000250"/>
    <property type="project" value="UniProtKB"/>
</dbReference>
<dbReference type="CDD" id="cd15312">
    <property type="entry name" value="7tmA_TAAR2_3_4"/>
    <property type="match status" value="1"/>
</dbReference>
<dbReference type="FunFam" id="1.20.1070.10:FF:000030">
    <property type="entry name" value="trace amine-associated receptor 1"/>
    <property type="match status" value="1"/>
</dbReference>
<dbReference type="Gene3D" id="1.20.1070.10">
    <property type="entry name" value="Rhodopsin 7-helix transmembrane proteins"/>
    <property type="match status" value="1"/>
</dbReference>
<dbReference type="InterPro" id="IPR000276">
    <property type="entry name" value="GPCR_Rhodpsn"/>
</dbReference>
<dbReference type="InterPro" id="IPR017452">
    <property type="entry name" value="GPCR_Rhodpsn_7TM"/>
</dbReference>
<dbReference type="InterPro" id="IPR050569">
    <property type="entry name" value="TAAR"/>
</dbReference>
<dbReference type="InterPro" id="IPR009132">
    <property type="entry name" value="TAAR_fam"/>
</dbReference>
<dbReference type="PANTHER" id="PTHR24249">
    <property type="entry name" value="HISTAMINE RECEPTOR-RELATED G-PROTEIN COUPLED RECEPTOR"/>
    <property type="match status" value="1"/>
</dbReference>
<dbReference type="PANTHER" id="PTHR24249:SF82">
    <property type="entry name" value="TRACE AMINE-ASSOCIATED RECEPTOR 3-RELATED"/>
    <property type="match status" value="1"/>
</dbReference>
<dbReference type="Pfam" id="PF00001">
    <property type="entry name" value="7tm_1"/>
    <property type="match status" value="1"/>
</dbReference>
<dbReference type="PRINTS" id="PR00237">
    <property type="entry name" value="GPCRRHODOPSN"/>
</dbReference>
<dbReference type="PRINTS" id="PR01830">
    <property type="entry name" value="TRACEAMINER"/>
</dbReference>
<dbReference type="SMART" id="SM01381">
    <property type="entry name" value="7TM_GPCR_Srsx"/>
    <property type="match status" value="1"/>
</dbReference>
<dbReference type="SUPFAM" id="SSF81321">
    <property type="entry name" value="Family A G protein-coupled receptor-like"/>
    <property type="match status" value="1"/>
</dbReference>
<dbReference type="PROSITE" id="PS00237">
    <property type="entry name" value="G_PROTEIN_RECEP_F1_1"/>
    <property type="match status" value="1"/>
</dbReference>
<dbReference type="PROSITE" id="PS50262">
    <property type="entry name" value="G_PROTEIN_RECEP_F1_2"/>
    <property type="match status" value="1"/>
</dbReference>
<sequence length="343" mass="39065">MDLTYIPEDLSSCPKFVNKILSSHQPLFSCPGDNVFGYDWSHDYPLFGNLVIMVSISHFKQLHSPTNFLILSMATTDFLLGFVIMPYSIMRSVESCWYFGDGFCKFHTSFDMMLRLTSIFHLCSIAIDRFYAVCYPLHYTTKMTNSTIKQLLAFCWSVPALFSFGLVLSEADVSGMQSYKILVACFNFCALTFNKFWGTILFTTCFFTPGSIMVGIYGKIFIVSKQHARVISHVPENTKGAVKKHLSKKKDRKAAKTLGIVMGVFLACWLPCFLAVLIDPYLDYSTPILILDLLVWLRYFNSTCNPLIHGFFNPWFQKAFKYIVSGKIFSSHSETANLFPEAH</sequence>
<proteinExistence type="uncertain"/>
<organism>
    <name type="scientific">Homo sapiens</name>
    <name type="common">Human</name>
    <dbReference type="NCBI Taxonomy" id="9606"/>
    <lineage>
        <taxon>Eukaryota</taxon>
        <taxon>Metazoa</taxon>
        <taxon>Chordata</taxon>
        <taxon>Craniata</taxon>
        <taxon>Vertebrata</taxon>
        <taxon>Euteleostomi</taxon>
        <taxon>Mammalia</taxon>
        <taxon>Eutheria</taxon>
        <taxon>Euarchontoglires</taxon>
        <taxon>Primates</taxon>
        <taxon>Haplorrhini</taxon>
        <taxon>Catarrhini</taxon>
        <taxon>Hominidae</taxon>
        <taxon>Homo</taxon>
    </lineage>
</organism>
<protein>
    <recommendedName>
        <fullName>Putative trace amine-associated receptor 3</fullName>
        <shortName>TaR-3</shortName>
        <shortName>Trace amine receptor 3</shortName>
        <shortName>hTaar3</shortName>
    </recommendedName>
    <alternativeName>
        <fullName>G-protein coupled receptor 57</fullName>
    </alternativeName>
</protein>
<keyword id="KW-1003">Cell membrane</keyword>
<keyword id="KW-1015">Disulfide bond</keyword>
<keyword id="KW-0297">G-protein coupled receptor</keyword>
<keyword id="KW-0325">Glycoprotein</keyword>
<keyword id="KW-0472">Membrane</keyword>
<keyword id="KW-0675">Receptor</keyword>
<keyword id="KW-1185">Reference proteome</keyword>
<keyword id="KW-0807">Transducer</keyword>
<keyword id="KW-0812">Transmembrane</keyword>
<keyword id="KW-1133">Transmembrane helix</keyword>
<feature type="chain" id="PRO_0000070149" description="Putative trace amine-associated receptor 3">
    <location>
        <begin position="1"/>
        <end position="343"/>
    </location>
</feature>
<feature type="topological domain" description="Extracellular" evidence="3">
    <location>
        <begin position="1"/>
        <end position="35"/>
    </location>
</feature>
<feature type="transmembrane region" description="Helical; Name=1" evidence="3">
    <location>
        <begin position="36"/>
        <end position="56"/>
    </location>
</feature>
<feature type="topological domain" description="Cytoplasmic" evidence="3">
    <location>
        <begin position="57"/>
        <end position="68"/>
    </location>
</feature>
<feature type="transmembrane region" description="Helical; Name=2" evidence="3">
    <location>
        <begin position="69"/>
        <end position="89"/>
    </location>
</feature>
<feature type="topological domain" description="Extracellular" evidence="3">
    <location>
        <begin position="90"/>
        <end position="150"/>
    </location>
</feature>
<feature type="transmembrane region" description="Helical; Name=3" evidence="3">
    <location>
        <begin position="151"/>
        <end position="168"/>
    </location>
</feature>
<feature type="topological domain" description="Cytoplasmic" evidence="3">
    <location>
        <begin position="169"/>
        <end position="172"/>
    </location>
</feature>
<feature type="transmembrane region" description="Helical; Name=4" evidence="3">
    <location>
        <begin position="173"/>
        <end position="193"/>
    </location>
</feature>
<feature type="topological domain" description="Extracellular" evidence="3">
    <location>
        <begin position="194"/>
        <end position="198"/>
    </location>
</feature>
<feature type="transmembrane region" description="Helical; Name=5" evidence="3">
    <location>
        <begin position="199"/>
        <end position="223"/>
    </location>
</feature>
<feature type="topological domain" description="Cytoplasmic" evidence="3">
    <location>
        <begin position="224"/>
        <end position="257"/>
    </location>
</feature>
<feature type="transmembrane region" description="Helical; Name=6" evidence="3">
    <location>
        <begin position="258"/>
        <end position="278"/>
    </location>
</feature>
<feature type="topological domain" description="Extracellular" evidence="3">
    <location>
        <begin position="279"/>
        <end position="287"/>
    </location>
</feature>
<feature type="transmembrane region" description="Helical; Name=7" evidence="3">
    <location>
        <begin position="288"/>
        <end position="308"/>
    </location>
</feature>
<feature type="topological domain" description="Cytoplasmic" evidence="3">
    <location>
        <begin position="309"/>
        <end position="343"/>
    </location>
</feature>
<feature type="region of interest" description="Extracellular Loop 2 (ECL2)" evidence="1">
    <location>
        <begin position="173"/>
        <end position="186"/>
    </location>
</feature>
<feature type="glycosylation site" description="N-linked (GlcNAc...) asparagine" evidence="3">
    <location>
        <position position="145"/>
    </location>
</feature>
<feature type="disulfide bond" evidence="4">
    <location>
        <begin position="104"/>
        <end position="189"/>
    </location>
</feature>